<protein>
    <recommendedName>
        <fullName>Envelope glycoprotein gp150</fullName>
    </recommendedName>
    <alternativeName>
        <fullName>Env polyprotein</fullName>
    </alternativeName>
    <component>
        <recommendedName>
            <fullName>Surface protein</fullName>
            <shortName>SU</shortName>
        </recommendedName>
        <alternativeName>
            <fullName>Glycoprotein 100</fullName>
            <shortName>gp100</shortName>
        </alternativeName>
    </component>
    <component>
        <recommendedName>
            <fullName>Transmembrane protein</fullName>
            <shortName>TM</shortName>
        </recommendedName>
        <alternativeName>
            <fullName>Glycoprotein 36</fullName>
            <shortName>gp36</shortName>
        </alternativeName>
    </component>
</protein>
<evidence type="ECO:0000250" key="1"/>
<evidence type="ECO:0000255" key="2"/>
<organism>
    <name type="scientific">Feline immunodeficiency virus (strain San Diego)</name>
    <name type="common">FIV</name>
    <dbReference type="NCBI Taxonomy" id="11675"/>
    <lineage>
        <taxon>Viruses</taxon>
        <taxon>Riboviria</taxon>
        <taxon>Pararnavirae</taxon>
        <taxon>Artverviricota</taxon>
        <taxon>Revtraviricetes</taxon>
        <taxon>Ortervirales</taxon>
        <taxon>Retroviridae</taxon>
        <taxon>Orthoretrovirinae</taxon>
        <taxon>Lentivirus</taxon>
        <taxon>Feline immunodeficiency virus</taxon>
    </lineage>
</organism>
<accession>P19030</accession>
<dbReference type="EMBL" id="M36968">
    <property type="protein sequence ID" value="AAA43079.1"/>
    <property type="molecule type" value="Genomic_RNA"/>
</dbReference>
<dbReference type="GlyCosmos" id="P19030">
    <property type="glycosylation" value="22 sites, No reported glycans"/>
</dbReference>
<dbReference type="GO" id="GO:0020002">
    <property type="term" value="C:host cell plasma membrane"/>
    <property type="evidence" value="ECO:0007669"/>
    <property type="project" value="UniProtKB-SubCell"/>
</dbReference>
<dbReference type="GO" id="GO:0016020">
    <property type="term" value="C:membrane"/>
    <property type="evidence" value="ECO:0007669"/>
    <property type="project" value="UniProtKB-KW"/>
</dbReference>
<dbReference type="GO" id="GO:0019031">
    <property type="term" value="C:viral envelope"/>
    <property type="evidence" value="ECO:0007669"/>
    <property type="project" value="UniProtKB-KW"/>
</dbReference>
<dbReference type="GO" id="GO:0055036">
    <property type="term" value="C:virion membrane"/>
    <property type="evidence" value="ECO:0007669"/>
    <property type="project" value="UniProtKB-SubCell"/>
</dbReference>
<dbReference type="GO" id="GO:0005198">
    <property type="term" value="F:structural molecule activity"/>
    <property type="evidence" value="ECO:0007669"/>
    <property type="project" value="InterPro"/>
</dbReference>
<dbReference type="GO" id="GO:0046718">
    <property type="term" value="P:symbiont entry into host cell"/>
    <property type="evidence" value="ECO:0007669"/>
    <property type="project" value="UniProtKB-KW"/>
</dbReference>
<dbReference type="GO" id="GO:0019062">
    <property type="term" value="P:virion attachment to host cell"/>
    <property type="evidence" value="ECO:0007669"/>
    <property type="project" value="UniProtKB-KW"/>
</dbReference>
<dbReference type="CDD" id="cd09909">
    <property type="entry name" value="HIV-1-like_HR1-HR2"/>
    <property type="match status" value="1"/>
</dbReference>
<dbReference type="InterPro" id="IPR018582">
    <property type="entry name" value="Envelope_glycop_lentivirus"/>
</dbReference>
<dbReference type="InterPro" id="IPR000328">
    <property type="entry name" value="GP41-like"/>
</dbReference>
<dbReference type="Pfam" id="PF09590">
    <property type="entry name" value="Env-gp36"/>
    <property type="match status" value="1"/>
</dbReference>
<gene>
    <name type="primary">env</name>
</gene>
<proteinExistence type="inferred from homology"/>
<sequence length="854" mass="98333">MAEGFAANRQWIGPEEAEELLDFDKATQMNEEGPLNPGVNPFRVPAVTEADKQEYCKILQPRLQEIRNEIQEVKLEEGNAGKFRRARFLRYSDESILSLIHLFIGYCTYLVNRRRLGSLRHDINIEAPQEEQYSSREQGTTENIKYGRRCLIGTASLYLLLFIGVAIYLGTTNAQIVWRLPPLVVPVEESEIIFWDCWAPEEPACQDFLGAMIHLKASTNISIQEGPTLGNWAREIWGTLFKKATRHCRRNKIWKRWNETITGPVGCANNTCYNISVIIPDYQCYLDRVDTWLQGKVNISLCLTGGKMLYNRDTKQLSYCTDPLQIPLINYTFGPNQTCMWNTSQIQDPEIPKCGWWNQIAYYNSCRWESTNVKFYCQRTQSQPGTWIRTISSWRQKNRWEWRPDFESEKVKISLQCNSTHNLTFAMRSSGDYGEVMGAWIEFGCHRNKSRFHTEARFRIRCRWNVGDNTSLIDTCGKNLNVSGANPVDCTMYANKMYNCSLQNGFTMKVDDLIMHFNMTKAVEMYNIAGNWSCKSDLPQNWGYMNCNCTNGTSNDNKMACPEDKGILRNWYNPVAGLRQALEKYQVVKQPEYIVVPTEVMTYKYKQKRAAIHIMLALATVLSIAGAGTGATAIGMVTQYQQVLATHQEALDKITEALKINNLRLVTLEHQMLVIGLKVEAIEKFLYTAFAMQELGCNQNQFFCEIPKELWLRYNMTLNQTIWNHGNITLGEWYNQTKYLQQKFYEIIMDIEQNNVQGKQGLQKLQNWQDWMGWIGKIPQYLKGLLGGILGIGLGILLLILCLPTLVDCIRNCISKVLGYTVIAMPEIDDEEETVQMELRKNGRQCGMSEKEEE</sequence>
<comment type="function">
    <text evidence="1">The surface protein (SU) attaches the virus to the host cell by binding to its receptor. This interaction triggers the refolding of the transmembrane protein (TM) and is thought to activate its fusogenic potential by unmasking its fusion peptide. Fusion occurs at the host cell plasma membrane (By similarity).</text>
</comment>
<comment type="function">
    <text evidence="1">The transmembrane protein (TM) acts as a class I viral fusion protein. Under the current model, the protein has at least 3 conformational states: pre-fusion native state, pre-hairpin intermediate state, and post-fusion hairpin state. During viral and target cell membrane fusion, the coiled coil regions (heptad repeats) assume a trimer-of-hairpins structure, positioning the fusion peptide in close proximity to the C-terminal region of the ectodomain. The formation of this structure appears to drive apposition and subsequent fusion of viral and target cell membranes. Membranes fusion leads to delivery of the nucleocapsid into the cytoplasm (By similarity).</text>
</comment>
<comment type="subunit">
    <text evidence="1">The mature envelope protein (Env) consists of a trimer of SU-TM heterodimers attached by non-covalent interactions or by a labile interchain disulfide bond.</text>
</comment>
<comment type="subcellular location">
    <molecule>Transmembrane protein</molecule>
    <subcellularLocation>
        <location evidence="1">Virion membrane</location>
        <topology evidence="1">Single-pass type I membrane protein</topology>
    </subcellularLocation>
    <subcellularLocation>
        <location evidence="1">Host cell membrane</location>
        <topology evidence="1">Single-pass type I membrane protein</topology>
    </subcellularLocation>
    <text evidence="1">It is probably concentrated at the site of budding and incorporated into the virions possibly by contacts between the cytoplasmic tail of Env and the N-terminus of Gag.</text>
</comment>
<comment type="subcellular location">
    <molecule>Surface protein</molecule>
    <subcellularLocation>
        <location evidence="1">Virion membrane</location>
        <topology evidence="1">Peripheral membrane protein</topology>
    </subcellularLocation>
    <subcellularLocation>
        <location evidence="1">Host cell membrane</location>
        <topology evidence="1">Peripheral membrane protein</topology>
    </subcellularLocation>
    <text evidence="1">The surface protein is not anchored to the viral envelope, but associates with the extravirion surface through its binding to TM. It is probably concentrated at the site of budding and incorporated into the virions possibly by contacts between the cytoplasmic tail of Env and the N-terminus of Gag (By similarity).</text>
</comment>
<comment type="PTM">
    <text evidence="1">Specific enzymatic cleavages in vivo yield mature proteins. Envelope glycoproteins are synthesized as an inactive precursor that is N-glycosylated and processed likely by host cell furin or by a furin-like protease in the Golgi to yield the mature SU and TM proteins. The cleavage site between SU and TM requires the minimal sequence [KR]-X-[KR]-R (By similarity).</text>
</comment>
<name>ENV_FIVSD</name>
<feature type="chain" id="PRO_0000239533" description="Envelope glycoprotein gp150">
    <location>
        <begin position="1"/>
        <end position="854"/>
    </location>
</feature>
<feature type="chain" id="PRO_0000038719" description="Surface protein" evidence="1">
    <location>
        <begin position="1"/>
        <end position="609"/>
    </location>
</feature>
<feature type="chain" id="PRO_0000038720" description="Transmembrane protein" evidence="1">
    <location>
        <begin position="610"/>
        <end position="854"/>
    </location>
</feature>
<feature type="topological domain" description="Extracellular" evidence="2">
    <location>
        <begin position="1"/>
        <end position="783"/>
    </location>
</feature>
<feature type="transmembrane region" description="Helical" evidence="2">
    <location>
        <begin position="784"/>
        <end position="804"/>
    </location>
</feature>
<feature type="topological domain" description="Cytoplasmic" evidence="2">
    <location>
        <begin position="805"/>
        <end position="854"/>
    </location>
</feature>
<feature type="region of interest" description="Fusion peptide" evidence="2">
    <location>
        <begin position="614"/>
        <end position="634"/>
    </location>
</feature>
<feature type="region of interest" description="Immunosuppression" evidence="1">
    <location>
        <begin position="660"/>
        <end position="678"/>
    </location>
</feature>
<feature type="coiled-coil region" evidence="2">
    <location>
        <begin position="641"/>
        <end position="691"/>
    </location>
</feature>
<feature type="coiled-coil region" evidence="2">
    <location>
        <begin position="734"/>
        <end position="770"/>
    </location>
</feature>
<feature type="site" description="Cleavage; by host" evidence="1">
    <location>
        <begin position="609"/>
        <end position="610"/>
    </location>
</feature>
<feature type="glycosylation site" description="N-linked (GlcNAc...) asparagine; by host" evidence="2">
    <location>
        <position position="220"/>
    </location>
</feature>
<feature type="glycosylation site" description="N-linked (GlcNAc...) asparagine; by host" evidence="2">
    <location>
        <position position="258"/>
    </location>
</feature>
<feature type="glycosylation site" description="N-linked (GlcNAc...) asparagine; by host" evidence="2">
    <location>
        <position position="269"/>
    </location>
</feature>
<feature type="glycosylation site" description="N-linked (GlcNAc...) asparagine; by host" evidence="2">
    <location>
        <position position="274"/>
    </location>
</feature>
<feature type="glycosylation site" description="N-linked (GlcNAc...) asparagine; by host" evidence="2">
    <location>
        <position position="298"/>
    </location>
</feature>
<feature type="glycosylation site" description="N-linked (GlcNAc...) asparagine; by host" evidence="2">
    <location>
        <position position="330"/>
    </location>
</feature>
<feature type="glycosylation site" description="N-linked (GlcNAc...) asparagine; by host" evidence="2">
    <location>
        <position position="336"/>
    </location>
</feature>
<feature type="glycosylation site" description="N-linked (GlcNAc...) asparagine; by host" evidence="2">
    <location>
        <position position="342"/>
    </location>
</feature>
<feature type="glycosylation site" description="N-linked (GlcNAc...) asparagine; by host" evidence="2">
    <location>
        <position position="418"/>
    </location>
</feature>
<feature type="glycosylation site" description="N-linked (GlcNAc...) asparagine; by host" evidence="2">
    <location>
        <position position="422"/>
    </location>
</feature>
<feature type="glycosylation site" description="N-linked (GlcNAc...) asparagine; by host" evidence="2">
    <location>
        <position position="448"/>
    </location>
</feature>
<feature type="glycosylation site" description="N-linked (GlcNAc...) asparagine; by host" evidence="2">
    <location>
        <position position="469"/>
    </location>
</feature>
<feature type="glycosylation site" description="N-linked (GlcNAc...) asparagine; by host" evidence="2">
    <location>
        <position position="481"/>
    </location>
</feature>
<feature type="glycosylation site" description="N-linked (GlcNAc...) asparagine; by host" evidence="2">
    <location>
        <position position="499"/>
    </location>
</feature>
<feature type="glycosylation site" description="N-linked (GlcNAc...) asparagine; by host" evidence="2">
    <location>
        <position position="518"/>
    </location>
</feature>
<feature type="glycosylation site" description="N-linked (GlcNAc...) asparagine; by host" evidence="2">
    <location>
        <position position="531"/>
    </location>
</feature>
<feature type="glycosylation site" description="N-linked (GlcNAc...) asparagine; by host" evidence="2">
    <location>
        <position position="548"/>
    </location>
</feature>
<feature type="glycosylation site" description="N-linked (GlcNAc...) asparagine; by host" evidence="2">
    <location>
        <position position="551"/>
    </location>
</feature>
<feature type="glycosylation site" description="N-linked (GlcNAc...) asparagine; by host" evidence="2">
    <location>
        <position position="715"/>
    </location>
</feature>
<feature type="glycosylation site" description="N-linked (GlcNAc...) asparagine; by host" evidence="2">
    <location>
        <position position="719"/>
    </location>
</feature>
<feature type="glycosylation site" description="N-linked (GlcNAc...) asparagine; by host" evidence="2">
    <location>
        <position position="727"/>
    </location>
</feature>
<feature type="glycosylation site" description="N-linked (GlcNAc...) asparagine; by host" evidence="2">
    <location>
        <position position="735"/>
    </location>
</feature>
<reference key="1">
    <citation type="journal article" date="1990" name="J. Virol.">
        <title>Comparison of two host cell range variants of feline immunodeficiency virus.</title>
        <authorList>
            <person name="Phillips T.R."/>
            <person name="Talbott R.L."/>
            <person name="Lamont C."/>
            <person name="Muir S."/>
            <person name="Lovelace K.M."/>
            <person name="Elder J.H."/>
        </authorList>
    </citation>
    <scope>NUCLEOTIDE SEQUENCE [GENOMIC RNA]</scope>
    <source>
        <strain>Isolate PPR</strain>
    </source>
</reference>
<keyword id="KW-0165">Cleavage on pair of basic residues</keyword>
<keyword id="KW-0175">Coiled coil</keyword>
<keyword id="KW-1015">Disulfide bond</keyword>
<keyword id="KW-0325">Glycoprotein</keyword>
<keyword id="KW-1032">Host cell membrane</keyword>
<keyword id="KW-1043">Host membrane</keyword>
<keyword id="KW-0945">Host-virus interaction</keyword>
<keyword id="KW-0472">Membrane</keyword>
<keyword id="KW-0812">Transmembrane</keyword>
<keyword id="KW-1133">Transmembrane helix</keyword>
<keyword id="KW-1161">Viral attachment to host cell</keyword>
<keyword id="KW-0261">Viral envelope protein</keyword>
<keyword id="KW-0946">Virion</keyword>
<keyword id="KW-1160">Virus entry into host cell</keyword>
<organismHost>
    <name type="scientific">Felidae</name>
    <name type="common">cat family</name>
    <dbReference type="NCBI Taxonomy" id="9681"/>
</organismHost>